<keyword id="KW-0007">Acetylation</keyword>
<keyword id="KW-0150">Chloroplast</keyword>
<keyword id="KW-0903">Direct protein sequencing</keyword>
<keyword id="KW-0472">Membrane</keyword>
<keyword id="KW-0597">Phosphoprotein</keyword>
<keyword id="KW-0934">Plastid</keyword>
<keyword id="KW-1185">Reference proteome</keyword>
<keyword id="KW-0793">Thylakoid</keyword>
<keyword id="KW-0809">Transit peptide</keyword>
<keyword id="KW-0812">Transmembrane</keyword>
<keyword id="KW-1133">Transmembrane helix</keyword>
<protein>
    <recommendedName>
        <fullName>Protein CURVATURE THYLAKOID 1B, chloroplastic</fullName>
    </recommendedName>
    <alternativeName>
        <fullName>Photosystem I protein P</fullName>
    </alternativeName>
    <alternativeName>
        <fullName>Thylakoid membrane phosphoprotein 14 kDa</fullName>
    </alternativeName>
</protein>
<dbReference type="EMBL" id="AC005310">
    <property type="protein sequence ID" value="AAC33500.1"/>
    <property type="molecule type" value="Genomic_DNA"/>
</dbReference>
<dbReference type="EMBL" id="CP002685">
    <property type="protein sequence ID" value="AEC10758.1"/>
    <property type="molecule type" value="Genomic_DNA"/>
</dbReference>
<dbReference type="EMBL" id="CP002685">
    <property type="protein sequence ID" value="AEC10759.1"/>
    <property type="molecule type" value="Genomic_DNA"/>
</dbReference>
<dbReference type="EMBL" id="AY065156">
    <property type="protein sequence ID" value="AAL38332.1"/>
    <property type="molecule type" value="mRNA"/>
</dbReference>
<dbReference type="EMBL" id="AY114583">
    <property type="protein sequence ID" value="AAM47902.1"/>
    <property type="molecule type" value="mRNA"/>
</dbReference>
<dbReference type="EMBL" id="AY086711">
    <property type="protein sequence ID" value="AAM63765.1"/>
    <property type="molecule type" value="mRNA"/>
</dbReference>
<dbReference type="PIR" id="T02683">
    <property type="entry name" value="T02683"/>
</dbReference>
<dbReference type="RefSeq" id="NP_001031551.1">
    <property type="nucleotide sequence ID" value="NM_001036474.4"/>
</dbReference>
<dbReference type="RefSeq" id="NP_566086.1">
    <property type="nucleotide sequence ID" value="NM_130248.5"/>
</dbReference>
<dbReference type="BioGRID" id="4630">
    <property type="interactions" value="2"/>
</dbReference>
<dbReference type="FunCoup" id="Q8LCA1">
    <property type="interactions" value="1313"/>
</dbReference>
<dbReference type="IntAct" id="Q8LCA1">
    <property type="interactions" value="2"/>
</dbReference>
<dbReference type="MINT" id="Q8LCA1"/>
<dbReference type="STRING" id="3702.Q8LCA1"/>
<dbReference type="TCDB" id="8.A.155.1.2">
    <property type="family name" value="the curt protein (curtp) family"/>
</dbReference>
<dbReference type="iPTMnet" id="Q8LCA1"/>
<dbReference type="PaxDb" id="3702-AT2G46820.1"/>
<dbReference type="ProteomicsDB" id="220322"/>
<dbReference type="EnsemblPlants" id="AT2G46820.1">
    <property type="protein sequence ID" value="AT2G46820.1"/>
    <property type="gene ID" value="AT2G46820"/>
</dbReference>
<dbReference type="EnsemblPlants" id="AT2G46820.2">
    <property type="protein sequence ID" value="AT2G46820.2"/>
    <property type="gene ID" value="AT2G46820"/>
</dbReference>
<dbReference type="GeneID" id="819295"/>
<dbReference type="Gramene" id="AT2G46820.1">
    <property type="protein sequence ID" value="AT2G46820.1"/>
    <property type="gene ID" value="AT2G46820"/>
</dbReference>
<dbReference type="Gramene" id="AT2G46820.2">
    <property type="protein sequence ID" value="AT2G46820.2"/>
    <property type="gene ID" value="AT2G46820"/>
</dbReference>
<dbReference type="KEGG" id="ath:AT2G46820"/>
<dbReference type="Araport" id="AT2G46820"/>
<dbReference type="TAIR" id="AT2G46820">
    <property type="gene designation" value="PSI-P"/>
</dbReference>
<dbReference type="eggNOG" id="ENOG502QWJR">
    <property type="taxonomic scope" value="Eukaryota"/>
</dbReference>
<dbReference type="HOGENOM" id="CLU_095488_0_0_1"/>
<dbReference type="InParanoid" id="Q8LCA1"/>
<dbReference type="OMA" id="NVMGMAT"/>
<dbReference type="OrthoDB" id="2014299at2759"/>
<dbReference type="PhylomeDB" id="Q8LCA1"/>
<dbReference type="PRO" id="PR:Q8LCA1"/>
<dbReference type="Proteomes" id="UP000006548">
    <property type="component" value="Chromosome 2"/>
</dbReference>
<dbReference type="ExpressionAtlas" id="Q8LCA1">
    <property type="expression patterns" value="baseline and differential"/>
</dbReference>
<dbReference type="GO" id="GO:0009507">
    <property type="term" value="C:chloroplast"/>
    <property type="evidence" value="ECO:0007005"/>
    <property type="project" value="TAIR"/>
</dbReference>
<dbReference type="GO" id="GO:0009941">
    <property type="term" value="C:chloroplast envelope"/>
    <property type="evidence" value="ECO:0007005"/>
    <property type="project" value="TAIR"/>
</dbReference>
<dbReference type="GO" id="GO:0042644">
    <property type="term" value="C:chloroplast nucleoid"/>
    <property type="evidence" value="ECO:0007005"/>
    <property type="project" value="TAIR"/>
</dbReference>
<dbReference type="GO" id="GO:0030093">
    <property type="term" value="C:chloroplast photosystem I"/>
    <property type="evidence" value="ECO:0000314"/>
    <property type="project" value="TAIR"/>
</dbReference>
<dbReference type="GO" id="GO:0009534">
    <property type="term" value="C:chloroplast thylakoid"/>
    <property type="evidence" value="ECO:0007005"/>
    <property type="project" value="TAIR"/>
</dbReference>
<dbReference type="GO" id="GO:0009535">
    <property type="term" value="C:chloroplast thylakoid membrane"/>
    <property type="evidence" value="ECO:0007005"/>
    <property type="project" value="TAIR"/>
</dbReference>
<dbReference type="GO" id="GO:0005829">
    <property type="term" value="C:cytosol"/>
    <property type="evidence" value="ECO:0007005"/>
    <property type="project" value="TAIR"/>
</dbReference>
<dbReference type="GO" id="GO:0009515">
    <property type="term" value="C:granal stacked thylakoid"/>
    <property type="evidence" value="ECO:0000314"/>
    <property type="project" value="TAIR"/>
</dbReference>
<dbReference type="GO" id="GO:0009579">
    <property type="term" value="C:thylakoid"/>
    <property type="evidence" value="ECO:0007005"/>
    <property type="project" value="TAIR"/>
</dbReference>
<dbReference type="GO" id="GO:0003677">
    <property type="term" value="F:DNA binding"/>
    <property type="evidence" value="ECO:0000250"/>
    <property type="project" value="TAIR"/>
</dbReference>
<dbReference type="GO" id="GO:0019904">
    <property type="term" value="F:protein domain specific binding"/>
    <property type="evidence" value="ECO:0000353"/>
    <property type="project" value="CAFA"/>
</dbReference>
<dbReference type="GO" id="GO:0090391">
    <property type="term" value="P:granum assembly"/>
    <property type="evidence" value="ECO:0000315"/>
    <property type="project" value="TAIR"/>
</dbReference>
<dbReference type="GO" id="GO:0097753">
    <property type="term" value="P:membrane bending"/>
    <property type="evidence" value="ECO:0000314"/>
    <property type="project" value="TAIR"/>
</dbReference>
<dbReference type="GO" id="GO:0009773">
    <property type="term" value="P:photosynthetic electron transport in photosystem I"/>
    <property type="evidence" value="ECO:0000314"/>
    <property type="project" value="TAIR"/>
</dbReference>
<dbReference type="InterPro" id="IPR025564">
    <property type="entry name" value="CAAD_dom"/>
</dbReference>
<dbReference type="InterPro" id="IPR033344">
    <property type="entry name" value="CURT1"/>
</dbReference>
<dbReference type="PANTHER" id="PTHR33222">
    <property type="match status" value="1"/>
</dbReference>
<dbReference type="PANTHER" id="PTHR33222:SF9">
    <property type="entry name" value="PROTEIN CURVATURE THYLAKOID 1B, CHLOROPLASTIC"/>
    <property type="match status" value="1"/>
</dbReference>
<dbReference type="Pfam" id="PF14159">
    <property type="entry name" value="CAAD"/>
    <property type="match status" value="1"/>
</dbReference>
<organism>
    <name type="scientific">Arabidopsis thaliana</name>
    <name type="common">Mouse-ear cress</name>
    <dbReference type="NCBI Taxonomy" id="3702"/>
    <lineage>
        <taxon>Eukaryota</taxon>
        <taxon>Viridiplantae</taxon>
        <taxon>Streptophyta</taxon>
        <taxon>Embryophyta</taxon>
        <taxon>Tracheophyta</taxon>
        <taxon>Spermatophyta</taxon>
        <taxon>Magnoliopsida</taxon>
        <taxon>eudicotyledons</taxon>
        <taxon>Gunneridae</taxon>
        <taxon>Pentapetalae</taxon>
        <taxon>rosids</taxon>
        <taxon>malvids</taxon>
        <taxon>Brassicales</taxon>
        <taxon>Brassicaceae</taxon>
        <taxon>Camelineae</taxon>
        <taxon>Arabidopsis</taxon>
    </lineage>
</organism>
<proteinExistence type="evidence at protein level"/>
<feature type="transit peptide" description="Chloroplast" evidence="9">
    <location>
        <begin position="1"/>
        <end position="63"/>
    </location>
</feature>
<feature type="chain" id="PRO_0000022558" description="Protein CURVATURE THYLAKOID 1B, chloroplastic">
    <location>
        <begin position="64"/>
        <end position="174"/>
    </location>
</feature>
<feature type="topological domain" description="Stromal" evidence="6">
    <location>
        <begin position="64"/>
        <end position="100"/>
    </location>
</feature>
<feature type="transmembrane region" description="Helical" evidence="1">
    <location>
        <begin position="101"/>
        <end position="121"/>
    </location>
</feature>
<feature type="topological domain" description="Lumenal" evidence="6">
    <location>
        <begin position="122"/>
        <end position="126"/>
    </location>
</feature>
<feature type="transmembrane region" description="Helical" evidence="1">
    <location>
        <begin position="127"/>
        <end position="147"/>
    </location>
</feature>
<feature type="topological domain" description="Stromal" evidence="6">
    <location>
        <begin position="148"/>
        <end position="174"/>
    </location>
</feature>
<feature type="region of interest" description="Disordered" evidence="2">
    <location>
        <begin position="1"/>
        <end position="20"/>
    </location>
</feature>
<feature type="modified residue" description="N-acetylalanine" evidence="9">
    <location>
        <position position="64"/>
    </location>
</feature>
<feature type="sequence conflict" description="In Ref. 4; AAM63765." evidence="7" ref="4">
    <original>G</original>
    <variation>S</variation>
    <location>
        <position position="110"/>
    </location>
</feature>
<feature type="sequence conflict" description="In Ref. 4; AAM63765." evidence="7" ref="4">
    <original>A</original>
    <variation>P</variation>
    <location>
        <position position="123"/>
    </location>
</feature>
<comment type="function">
    <text evidence="6">Determines thylakoid architecture by inducing membrane curvature.</text>
</comment>
<comment type="subunit">
    <text evidence="4 5 6">Homo- and heterodimers and trimers. Interacts with PSAL.</text>
</comment>
<comment type="subcellular location">
    <subcellularLocation>
        <location evidence="6">Plastid</location>
        <location evidence="6">Chloroplast thylakoid membrane</location>
        <topology evidence="6">Multi-pass membrane protein</topology>
    </subcellularLocation>
    <text evidence="6">Located almost exclusively at grana margins.</text>
</comment>
<comment type="PTM">
    <text evidence="3 4">Phosphorylated on either Thr-65 or Thr-66 by a threonine specific thylakoid kinase.</text>
</comment>
<comment type="disruption phenotype">
    <text evidence="6">No effect on growth behavior, leaf coloration, grana stacks or photochemical efficiency of photosystem II. Curt1a, curt1b, curt1c and curt1d quadruple mutant shows disorganized thylakoids with extended stretches of unstacked membranes and broader stacks made up of fewer layers.</text>
</comment>
<comment type="similarity">
    <text evidence="7">Belongs to the CURT family.</text>
</comment>
<comment type="caution">
    <text evidence="8">Was previously thought to be part of the photosystem I complex.</text>
</comment>
<sequence length="174" mass="18482">MASLSVSSSSTIIDSRAPPSRLASASASSPSCISLPTLPIQSHTRAAKATAYCRKIVRNVVTRATTEVGEAPATTTEAETTELPEIVKTAQEAWEKVDDKYAIGSLAFAGVVALWGSAGMISAIDRLPLVPGVLELVGIGYTGWFTYKNLVFKPDREALFEKVKSTYKDILGSS</sequence>
<reference key="1">
    <citation type="journal article" date="1999" name="Nature">
        <title>Sequence and analysis of chromosome 2 of the plant Arabidopsis thaliana.</title>
        <authorList>
            <person name="Lin X."/>
            <person name="Kaul S."/>
            <person name="Rounsley S.D."/>
            <person name="Shea T.P."/>
            <person name="Benito M.-I."/>
            <person name="Town C.D."/>
            <person name="Fujii C.Y."/>
            <person name="Mason T.M."/>
            <person name="Bowman C.L."/>
            <person name="Barnstead M.E."/>
            <person name="Feldblyum T.V."/>
            <person name="Buell C.R."/>
            <person name="Ketchum K.A."/>
            <person name="Lee J.J."/>
            <person name="Ronning C.M."/>
            <person name="Koo H.L."/>
            <person name="Moffat K.S."/>
            <person name="Cronin L.A."/>
            <person name="Shen M."/>
            <person name="Pai G."/>
            <person name="Van Aken S."/>
            <person name="Umayam L."/>
            <person name="Tallon L.J."/>
            <person name="Gill J.E."/>
            <person name="Adams M.D."/>
            <person name="Carrera A.J."/>
            <person name="Creasy T.H."/>
            <person name="Goodman H.M."/>
            <person name="Somerville C.R."/>
            <person name="Copenhaver G.P."/>
            <person name="Preuss D."/>
            <person name="Nierman W.C."/>
            <person name="White O."/>
            <person name="Eisen J.A."/>
            <person name="Salzberg S.L."/>
            <person name="Fraser C.M."/>
            <person name="Venter J.C."/>
        </authorList>
    </citation>
    <scope>NUCLEOTIDE SEQUENCE [LARGE SCALE GENOMIC DNA]</scope>
    <source>
        <strain>cv. Columbia</strain>
    </source>
</reference>
<reference key="2">
    <citation type="journal article" date="2017" name="Plant J.">
        <title>Araport11: a complete reannotation of the Arabidopsis thaliana reference genome.</title>
        <authorList>
            <person name="Cheng C.Y."/>
            <person name="Krishnakumar V."/>
            <person name="Chan A.P."/>
            <person name="Thibaud-Nissen F."/>
            <person name="Schobel S."/>
            <person name="Town C.D."/>
        </authorList>
    </citation>
    <scope>GENOME REANNOTATION</scope>
    <source>
        <strain>cv. Columbia</strain>
    </source>
</reference>
<reference key="3">
    <citation type="journal article" date="2003" name="Science">
        <title>Empirical analysis of transcriptional activity in the Arabidopsis genome.</title>
        <authorList>
            <person name="Yamada K."/>
            <person name="Lim J."/>
            <person name="Dale J.M."/>
            <person name="Chen H."/>
            <person name="Shinn P."/>
            <person name="Palm C.J."/>
            <person name="Southwick A.M."/>
            <person name="Wu H.C."/>
            <person name="Kim C.J."/>
            <person name="Nguyen M."/>
            <person name="Pham P.K."/>
            <person name="Cheuk R.F."/>
            <person name="Karlin-Newmann G."/>
            <person name="Liu S.X."/>
            <person name="Lam B."/>
            <person name="Sakano H."/>
            <person name="Wu T."/>
            <person name="Yu G."/>
            <person name="Miranda M."/>
            <person name="Quach H.L."/>
            <person name="Tripp M."/>
            <person name="Chang C.H."/>
            <person name="Lee J.M."/>
            <person name="Toriumi M.J."/>
            <person name="Chan M.M."/>
            <person name="Tang C.C."/>
            <person name="Onodera C.S."/>
            <person name="Deng J.M."/>
            <person name="Akiyama K."/>
            <person name="Ansari Y."/>
            <person name="Arakawa T."/>
            <person name="Banh J."/>
            <person name="Banno F."/>
            <person name="Bowser L."/>
            <person name="Brooks S.Y."/>
            <person name="Carninci P."/>
            <person name="Chao Q."/>
            <person name="Choy N."/>
            <person name="Enju A."/>
            <person name="Goldsmith A.D."/>
            <person name="Gurjal M."/>
            <person name="Hansen N.F."/>
            <person name="Hayashizaki Y."/>
            <person name="Johnson-Hopson C."/>
            <person name="Hsuan V.W."/>
            <person name="Iida K."/>
            <person name="Karnes M."/>
            <person name="Khan S."/>
            <person name="Koesema E."/>
            <person name="Ishida J."/>
            <person name="Jiang P.X."/>
            <person name="Jones T."/>
            <person name="Kawai J."/>
            <person name="Kamiya A."/>
            <person name="Meyers C."/>
            <person name="Nakajima M."/>
            <person name="Narusaka M."/>
            <person name="Seki M."/>
            <person name="Sakurai T."/>
            <person name="Satou M."/>
            <person name="Tamse R."/>
            <person name="Vaysberg M."/>
            <person name="Wallender E.K."/>
            <person name="Wong C."/>
            <person name="Yamamura Y."/>
            <person name="Yuan S."/>
            <person name="Shinozaki K."/>
            <person name="Davis R.W."/>
            <person name="Theologis A."/>
            <person name="Ecker J.R."/>
        </authorList>
    </citation>
    <scope>NUCLEOTIDE SEQUENCE [LARGE SCALE MRNA]</scope>
    <source>
        <strain>cv. Columbia</strain>
    </source>
</reference>
<reference key="4">
    <citation type="submission" date="2002-03" db="EMBL/GenBank/DDBJ databases">
        <title>Full-length cDNA from Arabidopsis thaliana.</title>
        <authorList>
            <person name="Brover V.V."/>
            <person name="Troukhan M.E."/>
            <person name="Alexandrov N.A."/>
            <person name="Lu Y.-P."/>
            <person name="Flavell R.B."/>
            <person name="Feldmann K.A."/>
        </authorList>
    </citation>
    <scope>NUCLEOTIDE SEQUENCE [LARGE SCALE MRNA]</scope>
</reference>
<reference key="5">
    <citation type="journal article" date="2003" name="Mol. Cell. Proteomics">
        <title>Identification of three previously unknown in vivo protein phosphorylation sites in thylakoid membranes of Arabidopsis thaliana.</title>
        <authorList>
            <person name="Hansson M."/>
            <person name="Vener A.V."/>
        </authorList>
    </citation>
    <scope>PROTEIN SEQUENCE OF 64-88</scope>
    <scope>IDENTIFICATION BY MASS SPECTROMETRY</scope>
    <scope>PHOSPHORYLATION</scope>
    <source>
        <strain>cv. Wassilewskija</strain>
        <tissue>Leaf</tissue>
    </source>
</reference>
<reference key="6">
    <citation type="journal article" date="2005" name="FEBS Lett.">
        <title>A previously found thylakoid membrane protein of 14kDa (TMP14) is a novel subunit of plant photosystem I and is designated PSI-P.</title>
        <authorList>
            <person name="Khrouchtchova A."/>
            <person name="Hansson M."/>
            <person name="Paakkarinen V."/>
            <person name="Vainonen J.P."/>
            <person name="Zhang S."/>
            <person name="Jensen P.E."/>
            <person name="Scheller H.V."/>
            <person name="Vener A.V."/>
            <person name="Aro E.M."/>
            <person name="Haldrup A."/>
        </authorList>
    </citation>
    <scope>INTERACTION WITH PSAL</scope>
    <scope>PHOSPHORYLATION</scope>
</reference>
<reference key="7">
    <citation type="journal article" date="2008" name="Cell Res.">
        <title>Construction of a chloroplast protein interaction network and functional mining of photosynthetic proteins in Arabidopsis thaliana.</title>
        <authorList>
            <person name="Yu Q.B."/>
            <person name="Li G."/>
            <person name="Wang G."/>
            <person name="Sun J.C."/>
            <person name="Wang P.C."/>
            <person name="Wang C."/>
            <person name="Mi H.L."/>
            <person name="Ma W.M."/>
            <person name="Cui J."/>
            <person name="Cui Y.L."/>
            <person name="Chong K."/>
            <person name="Li Y.X."/>
            <person name="Li Y.H."/>
            <person name="Zhao Z."/>
            <person name="Shi T.L."/>
            <person name="Yang Z.N."/>
        </authorList>
    </citation>
    <scope>INTERACTION WITH PSAL</scope>
</reference>
<reference key="8">
    <citation type="journal article" date="2009" name="J. Proteomics">
        <title>Phosphoproteomic analysis of nuclei-enriched fractions from Arabidopsis thaliana.</title>
        <authorList>
            <person name="Jones A.M.E."/>
            <person name="MacLean D."/>
            <person name="Studholme D.J."/>
            <person name="Serna-Sanz A."/>
            <person name="Andreasson E."/>
            <person name="Rathjen J.P."/>
            <person name="Peck S.C."/>
        </authorList>
    </citation>
    <scope>IDENTIFICATION BY MASS SPECTROMETRY [LARGE SCALE ANALYSIS]</scope>
    <source>
        <strain>cv. Columbia</strain>
    </source>
</reference>
<reference key="9">
    <citation type="journal article" date="2009" name="Plant Physiol.">
        <title>Large-scale Arabidopsis phosphoproteome profiling reveals novel chloroplast kinase substrates and phosphorylation networks.</title>
        <authorList>
            <person name="Reiland S."/>
            <person name="Messerli G."/>
            <person name="Baerenfaller K."/>
            <person name="Gerrits B."/>
            <person name="Endler A."/>
            <person name="Grossmann J."/>
            <person name="Gruissem W."/>
            <person name="Baginsky S."/>
        </authorList>
    </citation>
    <scope>IDENTIFICATION BY MASS SPECTROMETRY [LARGE SCALE ANALYSIS]</scope>
</reference>
<reference key="10">
    <citation type="journal article" date="2012" name="Mol. Cell. Proteomics">
        <title>Comparative large-scale characterisation of plant vs. mammal proteins reveals similar and idiosyncratic N-alpha acetylation features.</title>
        <authorList>
            <person name="Bienvenut W.V."/>
            <person name="Sumpton D."/>
            <person name="Martinez A."/>
            <person name="Lilla S."/>
            <person name="Espagne C."/>
            <person name="Meinnel T."/>
            <person name="Giglione C."/>
        </authorList>
    </citation>
    <scope>ACETYLATION [LARGE SCALE ANALYSIS] AT ALA-64</scope>
    <scope>CLEAVAGE OF TRANSIT PEPTIDE [LARGE SCALE ANALYSIS] AFTER ARG-63</scope>
    <scope>IDENTIFICATION BY MASS SPECTROMETRY [LARGE SCALE ANALYSIS]</scope>
</reference>
<reference key="11">
    <citation type="journal article" date="2013" name="Plant Cell">
        <title>Arabidopsis CURVATURE THYLAKOID1 proteins modify thylakoid architecture by inducing membrane curvature.</title>
        <authorList>
            <person name="Armbruster U."/>
            <person name="Labs M."/>
            <person name="Pribil M."/>
            <person name="Viola S."/>
            <person name="Xu W."/>
            <person name="Scharfenberg M."/>
            <person name="Hertle A.P."/>
            <person name="Rojahn U."/>
            <person name="Jensen P.E."/>
            <person name="Rappaport F."/>
            <person name="Joliot P."/>
            <person name="Doermann P."/>
            <person name="Wanner G."/>
            <person name="Leister D."/>
        </authorList>
    </citation>
    <scope>FUNCTION</scope>
    <scope>TOPOLOGY</scope>
    <scope>SUBCELLULAR LOCATION</scope>
    <scope>SUBUNIT</scope>
    <scope>NOMENCLATURE</scope>
    <scope>DISRUPTION PHENOTYPE</scope>
</reference>
<evidence type="ECO:0000255" key="1"/>
<evidence type="ECO:0000256" key="2">
    <source>
        <dbReference type="SAM" id="MobiDB-lite"/>
    </source>
</evidence>
<evidence type="ECO:0000269" key="3">
    <source>
    </source>
</evidence>
<evidence type="ECO:0000269" key="4">
    <source>
    </source>
</evidence>
<evidence type="ECO:0000269" key="5">
    <source>
    </source>
</evidence>
<evidence type="ECO:0000269" key="6">
    <source>
    </source>
</evidence>
<evidence type="ECO:0000305" key="7"/>
<evidence type="ECO:0000305" key="8">
    <source>
    </source>
</evidence>
<evidence type="ECO:0007744" key="9">
    <source>
    </source>
</evidence>
<gene>
    <name type="primary">CURT1B</name>
    <name type="synonym">PSAP</name>
    <name type="synonym">PSI-P</name>
    <name type="synonym">TMP14</name>
    <name type="ordered locus">At2g46820</name>
    <name type="ORF">F19D11.10</name>
</gene>
<accession>Q8LCA1</accession>
<accession>O81038</accession>
<name>CUT1B_ARATH</name>